<proteinExistence type="inferred from homology"/>
<protein>
    <recommendedName>
        <fullName evidence="1">Large ribosomal subunit protein uL13</fullName>
    </recommendedName>
    <alternativeName>
        <fullName evidence="2">50S ribosomal protein L13</fullName>
    </alternativeName>
</protein>
<name>RL13_ALCBS</name>
<comment type="function">
    <text evidence="1">This protein is one of the early assembly proteins of the 50S ribosomal subunit, although it is not seen to bind rRNA by itself. It is important during the early stages of 50S assembly.</text>
</comment>
<comment type="subunit">
    <text evidence="1">Part of the 50S ribosomal subunit.</text>
</comment>
<comment type="similarity">
    <text evidence="1">Belongs to the universal ribosomal protein uL13 family.</text>
</comment>
<dbReference type="EMBL" id="AM286690">
    <property type="protein sequence ID" value="CAL16024.1"/>
    <property type="molecule type" value="Genomic_DNA"/>
</dbReference>
<dbReference type="RefSeq" id="WP_011587862.1">
    <property type="nucleotide sequence ID" value="NC_008260.1"/>
</dbReference>
<dbReference type="SMR" id="Q0VS24"/>
<dbReference type="STRING" id="393595.ABO_0576"/>
<dbReference type="KEGG" id="abo:ABO_0576"/>
<dbReference type="eggNOG" id="COG0102">
    <property type="taxonomic scope" value="Bacteria"/>
</dbReference>
<dbReference type="HOGENOM" id="CLU_082184_2_2_6"/>
<dbReference type="OrthoDB" id="9801330at2"/>
<dbReference type="Proteomes" id="UP000008871">
    <property type="component" value="Chromosome"/>
</dbReference>
<dbReference type="GO" id="GO:0022625">
    <property type="term" value="C:cytosolic large ribosomal subunit"/>
    <property type="evidence" value="ECO:0007669"/>
    <property type="project" value="TreeGrafter"/>
</dbReference>
<dbReference type="GO" id="GO:0003729">
    <property type="term" value="F:mRNA binding"/>
    <property type="evidence" value="ECO:0007669"/>
    <property type="project" value="TreeGrafter"/>
</dbReference>
<dbReference type="GO" id="GO:0003735">
    <property type="term" value="F:structural constituent of ribosome"/>
    <property type="evidence" value="ECO:0007669"/>
    <property type="project" value="InterPro"/>
</dbReference>
<dbReference type="GO" id="GO:0017148">
    <property type="term" value="P:negative regulation of translation"/>
    <property type="evidence" value="ECO:0007669"/>
    <property type="project" value="TreeGrafter"/>
</dbReference>
<dbReference type="GO" id="GO:0006412">
    <property type="term" value="P:translation"/>
    <property type="evidence" value="ECO:0007669"/>
    <property type="project" value="UniProtKB-UniRule"/>
</dbReference>
<dbReference type="CDD" id="cd00392">
    <property type="entry name" value="Ribosomal_L13"/>
    <property type="match status" value="1"/>
</dbReference>
<dbReference type="FunFam" id="3.90.1180.10:FF:000001">
    <property type="entry name" value="50S ribosomal protein L13"/>
    <property type="match status" value="1"/>
</dbReference>
<dbReference type="Gene3D" id="3.90.1180.10">
    <property type="entry name" value="Ribosomal protein L13"/>
    <property type="match status" value="1"/>
</dbReference>
<dbReference type="HAMAP" id="MF_01366">
    <property type="entry name" value="Ribosomal_uL13"/>
    <property type="match status" value="1"/>
</dbReference>
<dbReference type="InterPro" id="IPR005822">
    <property type="entry name" value="Ribosomal_uL13"/>
</dbReference>
<dbReference type="InterPro" id="IPR005823">
    <property type="entry name" value="Ribosomal_uL13_bac-type"/>
</dbReference>
<dbReference type="InterPro" id="IPR023563">
    <property type="entry name" value="Ribosomal_uL13_CS"/>
</dbReference>
<dbReference type="InterPro" id="IPR036899">
    <property type="entry name" value="Ribosomal_uL13_sf"/>
</dbReference>
<dbReference type="NCBIfam" id="TIGR01066">
    <property type="entry name" value="rplM_bact"/>
    <property type="match status" value="1"/>
</dbReference>
<dbReference type="PANTHER" id="PTHR11545:SF2">
    <property type="entry name" value="LARGE RIBOSOMAL SUBUNIT PROTEIN UL13M"/>
    <property type="match status" value="1"/>
</dbReference>
<dbReference type="PANTHER" id="PTHR11545">
    <property type="entry name" value="RIBOSOMAL PROTEIN L13"/>
    <property type="match status" value="1"/>
</dbReference>
<dbReference type="Pfam" id="PF00572">
    <property type="entry name" value="Ribosomal_L13"/>
    <property type="match status" value="1"/>
</dbReference>
<dbReference type="PIRSF" id="PIRSF002181">
    <property type="entry name" value="Ribosomal_L13"/>
    <property type="match status" value="1"/>
</dbReference>
<dbReference type="SUPFAM" id="SSF52161">
    <property type="entry name" value="Ribosomal protein L13"/>
    <property type="match status" value="1"/>
</dbReference>
<dbReference type="PROSITE" id="PS00783">
    <property type="entry name" value="RIBOSOMAL_L13"/>
    <property type="match status" value="1"/>
</dbReference>
<sequence length="142" mass="15897">MKTYSAKPESVKRDWYVVDASGKTLGRLATEVASRLRGKHKPEFTPHVDTGDYIVVINADKVAVTGKKASDKMYYRHTGYPGGLKEANFATLQAEKPEMIIEKAIKGMLPRNPLGRAMFRKLKVYAGTEHPHTAQQPQQLEI</sequence>
<gene>
    <name evidence="1" type="primary">rplM</name>
    <name type="ordered locus">ABO_0576</name>
</gene>
<feature type="chain" id="PRO_0000261676" description="Large ribosomal subunit protein uL13">
    <location>
        <begin position="1"/>
        <end position="142"/>
    </location>
</feature>
<evidence type="ECO:0000255" key="1">
    <source>
        <dbReference type="HAMAP-Rule" id="MF_01366"/>
    </source>
</evidence>
<evidence type="ECO:0000305" key="2"/>
<reference key="1">
    <citation type="journal article" date="2006" name="Nat. Biotechnol.">
        <title>Genome sequence of the ubiquitous hydrocarbon-degrading marine bacterium Alcanivorax borkumensis.</title>
        <authorList>
            <person name="Schneiker S."/>
            <person name="Martins dos Santos V.A.P."/>
            <person name="Bartels D."/>
            <person name="Bekel T."/>
            <person name="Brecht M."/>
            <person name="Buhrmester J."/>
            <person name="Chernikova T.N."/>
            <person name="Denaro R."/>
            <person name="Ferrer M."/>
            <person name="Gertler C."/>
            <person name="Goesmann A."/>
            <person name="Golyshina O.V."/>
            <person name="Kaminski F."/>
            <person name="Khachane A.N."/>
            <person name="Lang S."/>
            <person name="Linke B."/>
            <person name="McHardy A.C."/>
            <person name="Meyer F."/>
            <person name="Nechitaylo T."/>
            <person name="Puehler A."/>
            <person name="Regenhardt D."/>
            <person name="Rupp O."/>
            <person name="Sabirova J.S."/>
            <person name="Selbitschka W."/>
            <person name="Yakimov M.M."/>
            <person name="Timmis K.N."/>
            <person name="Vorhoelter F.-J."/>
            <person name="Weidner S."/>
            <person name="Kaiser O."/>
            <person name="Golyshin P.N."/>
        </authorList>
    </citation>
    <scope>NUCLEOTIDE SEQUENCE [LARGE SCALE GENOMIC DNA]</scope>
    <source>
        <strain>ATCC 700651 / DSM 11573 / NCIMB 13689 / SK2</strain>
    </source>
</reference>
<keyword id="KW-1185">Reference proteome</keyword>
<keyword id="KW-0687">Ribonucleoprotein</keyword>
<keyword id="KW-0689">Ribosomal protein</keyword>
<organism>
    <name type="scientific">Alcanivorax borkumensis (strain ATCC 700651 / DSM 11573 / NCIMB 13689 / SK2)</name>
    <dbReference type="NCBI Taxonomy" id="393595"/>
    <lineage>
        <taxon>Bacteria</taxon>
        <taxon>Pseudomonadati</taxon>
        <taxon>Pseudomonadota</taxon>
        <taxon>Gammaproteobacteria</taxon>
        <taxon>Oceanospirillales</taxon>
        <taxon>Alcanivoracaceae</taxon>
        <taxon>Alcanivorax</taxon>
    </lineage>
</organism>
<accession>Q0VS24</accession>